<proteinExistence type="inferred from homology"/>
<sequence length="314" mass="35647">MEDKNQTVVTEFLLLGLTDHPYQKIVLFFMFLFVYLITLGGNLGMITLIWIDPRLHTPMYFFLRHLSFVDICSSSSVVPKMLCNIFAEKKDITFLGCAAQMWFFGLFEAAECFLLAAMAYDRYVAICKPLLYTLIMSQQVCMQLVVGPYAMALISTMTHTIFTFCLPFCGSNIINHFFCDIFPLLSLACADTWVNKFVLFVLAGAIGVLSGLIIMVSYICILMTILKIQTADGKQKAFFTCFSHLAAVSILYGTLFLIYVRPSSSSSLGIYKVISLFYTVVIPMVNPLIYSLRNKEVKDAFRRKIERKKFIIGR</sequence>
<reference key="1">
    <citation type="submission" date="2001-07" db="EMBL/GenBank/DDBJ databases">
        <title>Genome-wide discovery and analysis of human seven transmembrane helix receptor genes.</title>
        <authorList>
            <person name="Suwa M."/>
            <person name="Sato T."/>
            <person name="Okouchi I."/>
            <person name="Arita M."/>
            <person name="Futami K."/>
            <person name="Matsumoto S."/>
            <person name="Tsutsumi S."/>
            <person name="Aburatani H."/>
            <person name="Asai K."/>
            <person name="Akiyama Y."/>
        </authorList>
    </citation>
    <scope>NUCLEOTIDE SEQUENCE [GENOMIC DNA]</scope>
</reference>
<reference key="2">
    <citation type="journal article" date="2004" name="Proc. Natl. Acad. Sci. U.S.A.">
        <title>The human olfactory receptor gene family.</title>
        <authorList>
            <person name="Malnic B."/>
            <person name="Godfrey P.A."/>
            <person name="Buck L.B."/>
        </authorList>
    </citation>
    <scope>IDENTIFICATION</scope>
</reference>
<reference key="3">
    <citation type="journal article" date="2004" name="Proc. Natl. Acad. Sci. U.S.A.">
        <authorList>
            <person name="Malnic B."/>
            <person name="Godfrey P.A."/>
            <person name="Buck L.B."/>
        </authorList>
    </citation>
    <scope>ERRATUM OF PUBMED:14983052</scope>
</reference>
<reference key="4">
    <citation type="journal article" date="2003" name="Nat. Genet.">
        <title>Different noses for different people.</title>
        <authorList>
            <person name="Menashe I."/>
            <person name="Man O."/>
            <person name="Lancet D."/>
            <person name="Gilad Y."/>
        </authorList>
    </citation>
    <scope>POLYMORPHISM</scope>
</reference>
<evidence type="ECO:0000255" key="1"/>
<evidence type="ECO:0000255" key="2">
    <source>
        <dbReference type="PROSITE-ProRule" id="PRU00521"/>
    </source>
</evidence>
<evidence type="ECO:0000305" key="3"/>
<accession>P0C626</accession>
<keyword id="KW-1003">Cell membrane</keyword>
<keyword id="KW-1015">Disulfide bond</keyword>
<keyword id="KW-0297">G-protein coupled receptor</keyword>
<keyword id="KW-0325">Glycoprotein</keyword>
<keyword id="KW-0472">Membrane</keyword>
<keyword id="KW-0675">Receptor</keyword>
<keyword id="KW-1185">Reference proteome</keyword>
<keyword id="KW-0807">Transducer</keyword>
<keyword id="KW-0812">Transmembrane</keyword>
<keyword id="KW-1133">Transmembrane helix</keyword>
<comment type="function">
    <text evidence="3">Odorant receptor.</text>
</comment>
<comment type="subcellular location">
    <subcellularLocation>
        <location>Cell membrane</location>
        <topology>Multi-pass membrane protein</topology>
    </subcellularLocation>
</comment>
<comment type="polymorphism">
    <text>A single nucleotide deletion at position Leu-135 in the gene coding for this protein produces a stop codon which is responsible for functional diversity thus producing a pseudogene.</text>
</comment>
<comment type="similarity">
    <text evidence="2">Belongs to the G-protein coupled receptor 1 family.</text>
</comment>
<comment type="online information" name="Human Olfactory Receptor Data Exploratorium (HORDE)">
    <link uri="http://genome.weizmann.ac.il/horde/card/index/symbol:OR5G3P"/>
</comment>
<organism>
    <name type="scientific">Homo sapiens</name>
    <name type="common">Human</name>
    <dbReference type="NCBI Taxonomy" id="9606"/>
    <lineage>
        <taxon>Eukaryota</taxon>
        <taxon>Metazoa</taxon>
        <taxon>Chordata</taxon>
        <taxon>Craniata</taxon>
        <taxon>Vertebrata</taxon>
        <taxon>Euteleostomi</taxon>
        <taxon>Mammalia</taxon>
        <taxon>Eutheria</taxon>
        <taxon>Euarchontoglires</taxon>
        <taxon>Primates</taxon>
        <taxon>Haplorrhini</taxon>
        <taxon>Catarrhini</taxon>
        <taxon>Hominidae</taxon>
        <taxon>Homo</taxon>
    </lineage>
</organism>
<protein>
    <recommendedName>
        <fullName>Olfactory receptor 5G3</fullName>
    </recommendedName>
    <alternativeName>
        <fullName>Olfactory receptor 5G6</fullName>
    </alternativeName>
    <alternativeName>
        <fullName>Olfactory receptor OR11-213</fullName>
    </alternativeName>
</protein>
<name>OR5G3_HUMAN</name>
<feature type="chain" id="PRO_0000315216" description="Olfactory receptor 5G3">
    <location>
        <begin position="1"/>
        <end position="314"/>
    </location>
</feature>
<feature type="topological domain" description="Extracellular" evidence="1">
    <location>
        <begin position="1"/>
        <end position="24"/>
    </location>
</feature>
<feature type="transmembrane region" description="Helical; Name=1" evidence="1">
    <location>
        <begin position="25"/>
        <end position="45"/>
    </location>
</feature>
<feature type="topological domain" description="Cytoplasmic" evidence="1">
    <location>
        <begin position="46"/>
        <end position="97"/>
    </location>
</feature>
<feature type="transmembrane region" description="Helical; Name=2" evidence="1">
    <location>
        <begin position="98"/>
        <end position="118"/>
    </location>
</feature>
<feature type="topological domain" description="Extracellular" evidence="1">
    <location>
        <begin position="119"/>
        <end position="143"/>
    </location>
</feature>
<feature type="transmembrane region" description="Helical; Name=3" evidence="1">
    <location>
        <begin position="144"/>
        <end position="164"/>
    </location>
</feature>
<feature type="topological domain" description="Cytoplasmic" evidence="1">
    <location>
        <begin position="165"/>
        <end position="167"/>
    </location>
</feature>
<feature type="transmembrane region" description="Helical; Name=4" evidence="1">
    <location>
        <begin position="168"/>
        <end position="188"/>
    </location>
</feature>
<feature type="topological domain" description="Extracellular" evidence="1">
    <location>
        <begin position="189"/>
        <end position="196"/>
    </location>
</feature>
<feature type="transmembrane region" description="Helical; Name=5" evidence="1">
    <location>
        <begin position="197"/>
        <end position="217"/>
    </location>
</feature>
<feature type="topological domain" description="Cytoplasmic" evidence="1">
    <location>
        <begin position="218"/>
        <end position="237"/>
    </location>
</feature>
<feature type="transmembrane region" description="Helical; Name=6" evidence="1">
    <location>
        <begin position="238"/>
        <end position="258"/>
    </location>
</feature>
<feature type="topological domain" description="Extracellular" evidence="1">
    <location>
        <begin position="259"/>
        <end position="268"/>
    </location>
</feature>
<feature type="transmembrane region" description="Helical; Name=7" evidence="1">
    <location>
        <begin position="269"/>
        <end position="289"/>
    </location>
</feature>
<feature type="topological domain" description="Cytoplasmic" evidence="1">
    <location>
        <begin position="290"/>
        <end position="314"/>
    </location>
</feature>
<feature type="glycosylation site" description="N-linked (GlcNAc...) asparagine" evidence="1">
    <location>
        <position position="5"/>
    </location>
</feature>
<feature type="disulfide bond" evidence="2">
    <location>
        <begin position="97"/>
        <end position="179"/>
    </location>
</feature>
<gene>
    <name type="primary">OR5G3</name>
    <name type="synonym">OR5G3P</name>
    <name type="synonym">OR5G6P</name>
</gene>
<dbReference type="EMBL" id="AB065498">
    <property type="status" value="NOT_ANNOTATED_CDS"/>
    <property type="molecule type" value="Genomic_DNA"/>
</dbReference>
<dbReference type="EMBL" id="BK004647">
    <property type="status" value="NOT_ANNOTATED_CDS"/>
    <property type="molecule type" value="Genomic_DNA"/>
</dbReference>
<dbReference type="SMR" id="P0C626"/>
<dbReference type="GlyCosmos" id="P0C626">
    <property type="glycosylation" value="1 site, No reported glycans"/>
</dbReference>
<dbReference type="GlyGen" id="P0C626">
    <property type="glycosylation" value="1 site"/>
</dbReference>
<dbReference type="BioMuta" id="OR5G3"/>
<dbReference type="DMDM" id="166215773"/>
<dbReference type="AGR" id="HGNC:15287"/>
<dbReference type="GeneCards" id="OR5G3"/>
<dbReference type="HGNC" id="HGNC:15287">
    <property type="gene designation" value="OR5G3"/>
</dbReference>
<dbReference type="neXtProt" id="NX_P0C626"/>
<dbReference type="InParanoid" id="P0C626"/>
<dbReference type="OrthoDB" id="9443097at2759"/>
<dbReference type="PAN-GO" id="P0C626">
    <property type="GO annotations" value="2 GO annotations based on evolutionary models"/>
</dbReference>
<dbReference type="PhylomeDB" id="P0C626"/>
<dbReference type="PathwayCommons" id="P0C626"/>
<dbReference type="Reactome" id="R-HSA-9752946">
    <property type="pathway name" value="Expression and translocation of olfactory receptors"/>
</dbReference>
<dbReference type="ChiTaRS" id="OR5G3">
    <property type="organism name" value="human"/>
</dbReference>
<dbReference type="Pharos" id="P0C626">
    <property type="development level" value="Tdark"/>
</dbReference>
<dbReference type="PRO" id="PR:P0C626"/>
<dbReference type="Proteomes" id="UP000005640">
    <property type="component" value="Unplaced"/>
</dbReference>
<dbReference type="RNAct" id="P0C626">
    <property type="molecule type" value="protein"/>
</dbReference>
<dbReference type="GO" id="GO:0005886">
    <property type="term" value="C:plasma membrane"/>
    <property type="evidence" value="ECO:0007669"/>
    <property type="project" value="UniProtKB-SubCell"/>
</dbReference>
<dbReference type="GO" id="GO:0004930">
    <property type="term" value="F:G protein-coupled receptor activity"/>
    <property type="evidence" value="ECO:0007669"/>
    <property type="project" value="UniProtKB-KW"/>
</dbReference>
<dbReference type="GO" id="GO:0005549">
    <property type="term" value="F:odorant binding"/>
    <property type="evidence" value="ECO:0000318"/>
    <property type="project" value="GO_Central"/>
</dbReference>
<dbReference type="GO" id="GO:0004984">
    <property type="term" value="F:olfactory receptor activity"/>
    <property type="evidence" value="ECO:0000318"/>
    <property type="project" value="GO_Central"/>
</dbReference>
<dbReference type="CDD" id="cd15414">
    <property type="entry name" value="7tmA_OR5G-like"/>
    <property type="match status" value="1"/>
</dbReference>
<dbReference type="FunFam" id="1.20.1070.10:FF:000003">
    <property type="entry name" value="Olfactory receptor"/>
    <property type="match status" value="1"/>
</dbReference>
<dbReference type="Gene3D" id="1.20.1070.10">
    <property type="entry name" value="Rhodopsin 7-helix transmembrane proteins"/>
    <property type="match status" value="1"/>
</dbReference>
<dbReference type="InterPro" id="IPR000276">
    <property type="entry name" value="GPCR_Rhodpsn"/>
</dbReference>
<dbReference type="InterPro" id="IPR017452">
    <property type="entry name" value="GPCR_Rhodpsn_7TM"/>
</dbReference>
<dbReference type="InterPro" id="IPR000725">
    <property type="entry name" value="Olfact_rcpt"/>
</dbReference>
<dbReference type="PANTHER" id="PTHR48018">
    <property type="entry name" value="OLFACTORY RECEPTOR"/>
    <property type="match status" value="1"/>
</dbReference>
<dbReference type="Pfam" id="PF13853">
    <property type="entry name" value="7tm_4"/>
    <property type="match status" value="1"/>
</dbReference>
<dbReference type="PRINTS" id="PR00237">
    <property type="entry name" value="GPCRRHODOPSN"/>
</dbReference>
<dbReference type="PRINTS" id="PR00245">
    <property type="entry name" value="OLFACTORYR"/>
</dbReference>
<dbReference type="SUPFAM" id="SSF81321">
    <property type="entry name" value="Family A G protein-coupled receptor-like"/>
    <property type="match status" value="1"/>
</dbReference>
<dbReference type="PROSITE" id="PS00237">
    <property type="entry name" value="G_PROTEIN_RECEP_F1_1"/>
    <property type="match status" value="1"/>
</dbReference>
<dbReference type="PROSITE" id="PS50262">
    <property type="entry name" value="G_PROTEIN_RECEP_F1_2"/>
    <property type="match status" value="1"/>
</dbReference>